<protein>
    <recommendedName>
        <fullName>Suppressor of smlA</fullName>
    </recommendedName>
    <alternativeName>
        <fullName>Protein secondary enhancer of smlA</fullName>
    </alternativeName>
</protein>
<keyword id="KW-1185">Reference proteome</keyword>
<proteinExistence type="predicted"/>
<gene>
    <name type="primary">sslA2</name>
    <name type="ORF">DDB_G0278309</name>
</gene>
<reference key="1">
    <citation type="journal article" date="2005" name="Nature">
        <title>The genome of the social amoeba Dictyostelium discoideum.</title>
        <authorList>
            <person name="Eichinger L."/>
            <person name="Pachebat J.A."/>
            <person name="Gloeckner G."/>
            <person name="Rajandream M.A."/>
            <person name="Sucgang R."/>
            <person name="Berriman M."/>
            <person name="Song J."/>
            <person name="Olsen R."/>
            <person name="Szafranski K."/>
            <person name="Xu Q."/>
            <person name="Tunggal B."/>
            <person name="Kummerfeld S."/>
            <person name="Madera M."/>
            <person name="Konfortov B.A."/>
            <person name="Rivero F."/>
            <person name="Bankier A.T."/>
            <person name="Lehmann R."/>
            <person name="Hamlin N."/>
            <person name="Davies R."/>
            <person name="Gaudet P."/>
            <person name="Fey P."/>
            <person name="Pilcher K."/>
            <person name="Chen G."/>
            <person name="Saunders D."/>
            <person name="Sodergren E.J."/>
            <person name="Davis P."/>
            <person name="Kerhornou A."/>
            <person name="Nie X."/>
            <person name="Hall N."/>
            <person name="Anjard C."/>
            <person name="Hemphill L."/>
            <person name="Bason N."/>
            <person name="Farbrother P."/>
            <person name="Desany B."/>
            <person name="Just E."/>
            <person name="Morio T."/>
            <person name="Rost R."/>
            <person name="Churcher C.M."/>
            <person name="Cooper J."/>
            <person name="Haydock S."/>
            <person name="van Driessche N."/>
            <person name="Cronin A."/>
            <person name="Goodhead I."/>
            <person name="Muzny D.M."/>
            <person name="Mourier T."/>
            <person name="Pain A."/>
            <person name="Lu M."/>
            <person name="Harper D."/>
            <person name="Lindsay R."/>
            <person name="Hauser H."/>
            <person name="James K.D."/>
            <person name="Quiles M."/>
            <person name="Madan Babu M."/>
            <person name="Saito T."/>
            <person name="Buchrieser C."/>
            <person name="Wardroper A."/>
            <person name="Felder M."/>
            <person name="Thangavelu M."/>
            <person name="Johnson D."/>
            <person name="Knights A."/>
            <person name="Loulseged H."/>
            <person name="Mungall K.L."/>
            <person name="Oliver K."/>
            <person name="Price C."/>
            <person name="Quail M.A."/>
            <person name="Urushihara H."/>
            <person name="Hernandez J."/>
            <person name="Rabbinowitsch E."/>
            <person name="Steffen D."/>
            <person name="Sanders M."/>
            <person name="Ma J."/>
            <person name="Kohara Y."/>
            <person name="Sharp S."/>
            <person name="Simmonds M.N."/>
            <person name="Spiegler S."/>
            <person name="Tivey A."/>
            <person name="Sugano S."/>
            <person name="White B."/>
            <person name="Walker D."/>
            <person name="Woodward J.R."/>
            <person name="Winckler T."/>
            <person name="Tanaka Y."/>
            <person name="Shaulsky G."/>
            <person name="Schleicher M."/>
            <person name="Weinstock G.M."/>
            <person name="Rosenthal A."/>
            <person name="Cox E.C."/>
            <person name="Chisholm R.L."/>
            <person name="Gibbs R.A."/>
            <person name="Loomis W.F."/>
            <person name="Platzer M."/>
            <person name="Kay R.R."/>
            <person name="Williams J.G."/>
            <person name="Dear P.H."/>
            <person name="Noegel A.A."/>
            <person name="Barrell B.G."/>
            <person name="Kuspa A."/>
        </authorList>
    </citation>
    <scope>NUCLEOTIDE SEQUENCE [LARGE SCALE GENOMIC DNA]</scope>
    <source>
        <strain>AX4</strain>
    </source>
</reference>
<comment type="function">
    <text>Involved in regulation of group size of aggregation streams.</text>
</comment>
<name>SSLA2_DICDI</name>
<dbReference type="EMBL" id="AAFI02000023">
    <property type="protein sequence ID" value="EAL68327.2"/>
    <property type="molecule type" value="Genomic_DNA"/>
</dbReference>
<dbReference type="RefSeq" id="XP_642279.4">
    <property type="nucleotide sequence ID" value="XM_637187.3"/>
</dbReference>
<dbReference type="FunCoup" id="P0DJ28">
    <property type="interactions" value="161"/>
</dbReference>
<dbReference type="STRING" id="44689.P0DJ28"/>
<dbReference type="GeneID" id="8621486"/>
<dbReference type="KEGG" id="ddi:DDB_G0278309"/>
<dbReference type="KEGG" id="ddi:DDB_G0284335"/>
<dbReference type="dictyBase" id="DDB_G0278309">
    <property type="gene designation" value="sslA2"/>
</dbReference>
<dbReference type="VEuPathDB" id="AmoebaDB:DDB_G0284335"/>
<dbReference type="HOGENOM" id="CLU_472093_0_0_1"/>
<dbReference type="InParanoid" id="P0DJ28"/>
<dbReference type="OMA" id="HINCIAT"/>
<dbReference type="PRO" id="PR:P0DJ28"/>
<dbReference type="Proteomes" id="UP000002195">
    <property type="component" value="Chromosome 3"/>
</dbReference>
<feature type="chain" id="PRO_0000413617" description="Suppressor of smlA">
    <location>
        <begin position="1"/>
        <end position="578"/>
    </location>
</feature>
<accession>P0DJ28</accession>
<accession>Q54PS2</accession>
<accession>Q54YC3</accession>
<accession>Q8MZN2</accession>
<sequence length="578" mass="67797">MRNEEAEKLFWIFNNKVRPINYSEIVENTTPRKSSINREKIESENNGQVYNELFFFKLLLNEDLSKFLISLINTNLRHEREKKLDKGKDISRLNDLTDITFWKFITDYLKNIYSNKNNDKIPPELINLKMMDHNRYSAVHNVLDMKSHRFEEYCEIFMNSALKYINIGNVLNCDETIYAYYGKDAIKDHILINNDSKPHSVGIEAYSLTTKLNISNCPYVISYGPRTPENCQSPFNSLKTLLDNLHSKYNWEDPRNNLIVCCDSAFALVNNKECLDELKCRILSSTRKSGVTVPQEIKIFVKPLLTIHKTFLFYDESTGLLYEYTKNTAGHINCIATNLYSRYSNPYVEINNNLNIEQFATIGNLFRFSKKELELIFVGETLHGTTLEILNGKYKTNFVKPPCGPFWNEQMLKKLSAEHIAQIYNDKYKKENNNLNKNDKIKKILEPLDSTQDGGIYDKNKNYSKKELQDLKIKVIGTHQNRSQMIHDQYIFWYNLVDITDKRYYATIRGSSSHSYTKLFILGGLFDLILNSYSLHREYHEMELECKNPENQPPEIIQTINKFVESLIFQFHELKELQ</sequence>
<organism>
    <name type="scientific">Dictyostelium discoideum</name>
    <name type="common">Social amoeba</name>
    <dbReference type="NCBI Taxonomy" id="44689"/>
    <lineage>
        <taxon>Eukaryota</taxon>
        <taxon>Amoebozoa</taxon>
        <taxon>Evosea</taxon>
        <taxon>Eumycetozoa</taxon>
        <taxon>Dictyostelia</taxon>
        <taxon>Dictyosteliales</taxon>
        <taxon>Dictyosteliaceae</taxon>
        <taxon>Dictyostelium</taxon>
    </lineage>
</organism>